<sequence length="467" mass="51813">MSPQTETKASVGFKAGVKDYKLTYYTPDYETKDTDILAAFRVTPQPGVPPEEAGAAVAAESSTGTWTTVWTDGLTSLDRYKGRCYHIETVIGEENQYIAYVAYPLDLFEEGSVTNMFTSIVGNVFGFKALRALRLEDLRIPTSYSKTFQGPPHGIQVERDKLNKYGRPLLGCTIKPKLGLSAKNYGRAVYECLRGGLDFTKDDENVNSQPFMRWRDRFLFCAEALYKAQAETGEIKGHYLNATAGTCEEMMKRAIFARELGVPIVMHDYLTGGFTANTSLAHYCRDNGLLLHIHRAMHAVIDRQKNHGMHFRVLAKALRMSGGDHIHGGTVVGKLEGEREMTLGFVDLLRDDFIEKDRSRGIFFTQDWVSMPGVIPVASGGIHVWHMPALTEIFGDDSVLQFGGGTLGHPWGNAPGAVANRVALEACVQARNEGRDLAREGNEIIREASKWSPELASACEVWKAIKF</sequence>
<proteinExistence type="inferred from homology"/>
<dbReference type="EC" id="4.1.1.39" evidence="1"/>
<dbReference type="EMBL" id="M81810">
    <property type="protein sequence ID" value="AAA84127.1"/>
    <property type="molecule type" value="Genomic_DNA"/>
</dbReference>
<dbReference type="SMR" id="P25829"/>
<dbReference type="GO" id="GO:0009507">
    <property type="term" value="C:chloroplast"/>
    <property type="evidence" value="ECO:0007669"/>
    <property type="project" value="UniProtKB-SubCell"/>
</dbReference>
<dbReference type="GO" id="GO:0000287">
    <property type="term" value="F:magnesium ion binding"/>
    <property type="evidence" value="ECO:0007669"/>
    <property type="project" value="InterPro"/>
</dbReference>
<dbReference type="GO" id="GO:0004497">
    <property type="term" value="F:monooxygenase activity"/>
    <property type="evidence" value="ECO:0007669"/>
    <property type="project" value="UniProtKB-KW"/>
</dbReference>
<dbReference type="GO" id="GO:0016984">
    <property type="term" value="F:ribulose-bisphosphate carboxylase activity"/>
    <property type="evidence" value="ECO:0007669"/>
    <property type="project" value="UniProtKB-EC"/>
</dbReference>
<dbReference type="GO" id="GO:0009853">
    <property type="term" value="P:photorespiration"/>
    <property type="evidence" value="ECO:0007669"/>
    <property type="project" value="UniProtKB-KW"/>
</dbReference>
<dbReference type="GO" id="GO:0019253">
    <property type="term" value="P:reductive pentose-phosphate cycle"/>
    <property type="evidence" value="ECO:0007669"/>
    <property type="project" value="UniProtKB-KW"/>
</dbReference>
<dbReference type="CDD" id="cd08212">
    <property type="entry name" value="RuBisCO_large_I"/>
    <property type="match status" value="1"/>
</dbReference>
<dbReference type="FunFam" id="3.20.20.110:FF:000001">
    <property type="entry name" value="Ribulose bisphosphate carboxylase large chain"/>
    <property type="match status" value="1"/>
</dbReference>
<dbReference type="FunFam" id="3.30.70.150:FF:000001">
    <property type="entry name" value="Ribulose bisphosphate carboxylase large chain"/>
    <property type="match status" value="1"/>
</dbReference>
<dbReference type="Gene3D" id="3.20.20.110">
    <property type="entry name" value="Ribulose bisphosphate carboxylase, large subunit, C-terminal domain"/>
    <property type="match status" value="1"/>
</dbReference>
<dbReference type="Gene3D" id="3.30.70.150">
    <property type="entry name" value="RuBisCO large subunit, N-terminal domain"/>
    <property type="match status" value="1"/>
</dbReference>
<dbReference type="HAMAP" id="MF_01338">
    <property type="entry name" value="RuBisCO_L_type1"/>
    <property type="match status" value="1"/>
</dbReference>
<dbReference type="InterPro" id="IPR033966">
    <property type="entry name" value="RuBisCO"/>
</dbReference>
<dbReference type="InterPro" id="IPR020878">
    <property type="entry name" value="RuBisCo_large_chain_AS"/>
</dbReference>
<dbReference type="InterPro" id="IPR000685">
    <property type="entry name" value="RuBisCO_lsu_C"/>
</dbReference>
<dbReference type="InterPro" id="IPR036376">
    <property type="entry name" value="RuBisCO_lsu_C_sf"/>
</dbReference>
<dbReference type="InterPro" id="IPR017443">
    <property type="entry name" value="RuBisCO_lsu_fd_N"/>
</dbReference>
<dbReference type="InterPro" id="IPR036422">
    <property type="entry name" value="RuBisCO_lsu_N_sf"/>
</dbReference>
<dbReference type="InterPro" id="IPR020888">
    <property type="entry name" value="RuBisCO_lsuI"/>
</dbReference>
<dbReference type="NCBIfam" id="NF003252">
    <property type="entry name" value="PRK04208.1"/>
    <property type="match status" value="1"/>
</dbReference>
<dbReference type="PANTHER" id="PTHR42704">
    <property type="entry name" value="RIBULOSE BISPHOSPHATE CARBOXYLASE"/>
    <property type="match status" value="1"/>
</dbReference>
<dbReference type="PANTHER" id="PTHR42704:SF15">
    <property type="entry name" value="RIBULOSE BISPHOSPHATE CARBOXYLASE LARGE CHAIN"/>
    <property type="match status" value="1"/>
</dbReference>
<dbReference type="Pfam" id="PF00016">
    <property type="entry name" value="RuBisCO_large"/>
    <property type="match status" value="1"/>
</dbReference>
<dbReference type="Pfam" id="PF02788">
    <property type="entry name" value="RuBisCO_large_N"/>
    <property type="match status" value="1"/>
</dbReference>
<dbReference type="SFLD" id="SFLDG01052">
    <property type="entry name" value="RuBisCO"/>
    <property type="match status" value="1"/>
</dbReference>
<dbReference type="SFLD" id="SFLDS00014">
    <property type="entry name" value="RuBisCO"/>
    <property type="match status" value="1"/>
</dbReference>
<dbReference type="SFLD" id="SFLDG00301">
    <property type="entry name" value="RuBisCO-like_proteins"/>
    <property type="match status" value="1"/>
</dbReference>
<dbReference type="SUPFAM" id="SSF51649">
    <property type="entry name" value="RuBisCo, C-terminal domain"/>
    <property type="match status" value="1"/>
</dbReference>
<dbReference type="SUPFAM" id="SSF54966">
    <property type="entry name" value="RuBisCO, large subunit, small (N-terminal) domain"/>
    <property type="match status" value="1"/>
</dbReference>
<dbReference type="PROSITE" id="PS00157">
    <property type="entry name" value="RUBISCO_LARGE"/>
    <property type="match status" value="1"/>
</dbReference>
<feature type="propeptide" id="PRO_0000031153" evidence="1">
    <location>
        <begin position="1"/>
        <end position="2"/>
    </location>
</feature>
<feature type="chain" id="PRO_0000031154" description="Ribulose bisphosphate carboxylase large chain">
    <location>
        <begin position="3"/>
        <end position="467" status="greater than"/>
    </location>
</feature>
<feature type="active site" description="Proton acceptor" evidence="1">
    <location>
        <position position="175"/>
    </location>
</feature>
<feature type="active site" description="Proton acceptor" evidence="1">
    <location>
        <position position="294"/>
    </location>
</feature>
<feature type="binding site" description="in homodimeric partner" evidence="1">
    <location>
        <position position="123"/>
    </location>
    <ligand>
        <name>substrate</name>
    </ligand>
</feature>
<feature type="binding site" evidence="1">
    <location>
        <position position="173"/>
    </location>
    <ligand>
        <name>substrate</name>
    </ligand>
</feature>
<feature type="binding site" evidence="1">
    <location>
        <position position="177"/>
    </location>
    <ligand>
        <name>substrate</name>
    </ligand>
</feature>
<feature type="binding site" description="via carbamate group" evidence="1">
    <location>
        <position position="201"/>
    </location>
    <ligand>
        <name>Mg(2+)</name>
        <dbReference type="ChEBI" id="CHEBI:18420"/>
    </ligand>
</feature>
<feature type="binding site" evidence="1">
    <location>
        <position position="203"/>
    </location>
    <ligand>
        <name>Mg(2+)</name>
        <dbReference type="ChEBI" id="CHEBI:18420"/>
    </ligand>
</feature>
<feature type="binding site" evidence="1">
    <location>
        <position position="204"/>
    </location>
    <ligand>
        <name>Mg(2+)</name>
        <dbReference type="ChEBI" id="CHEBI:18420"/>
    </ligand>
</feature>
<feature type="binding site" evidence="1">
    <location>
        <position position="295"/>
    </location>
    <ligand>
        <name>substrate</name>
    </ligand>
</feature>
<feature type="binding site" evidence="1">
    <location>
        <position position="327"/>
    </location>
    <ligand>
        <name>substrate</name>
    </ligand>
</feature>
<feature type="binding site" evidence="1">
    <location>
        <position position="379"/>
    </location>
    <ligand>
        <name>substrate</name>
    </ligand>
</feature>
<feature type="site" description="Transition state stabilizer" evidence="1">
    <location>
        <position position="334"/>
    </location>
</feature>
<feature type="modified residue" description="N-acetylproline" evidence="1">
    <location>
        <position position="3"/>
    </location>
</feature>
<feature type="modified residue" description="N6,N6,N6-trimethyllysine" evidence="1">
    <location>
        <position position="14"/>
    </location>
</feature>
<feature type="modified residue" description="N6-carboxylysine" evidence="1">
    <location>
        <position position="201"/>
    </location>
</feature>
<feature type="disulfide bond" description="Interchain; in linked form" evidence="1">
    <location>
        <position position="247"/>
    </location>
</feature>
<feature type="non-terminal residue">
    <location>
        <position position="467"/>
    </location>
</feature>
<protein>
    <recommendedName>
        <fullName evidence="1">Ribulose bisphosphate carboxylase large chain</fullName>
        <shortName evidence="1">RuBisCO large subunit</shortName>
        <ecNumber evidence="1">4.1.1.39</ecNumber>
    </recommendedName>
</protein>
<organism>
    <name type="scientific">Calamus usitatus</name>
    <name type="common">Palm tree</name>
    <dbReference type="NCBI Taxonomy" id="4712"/>
    <lineage>
        <taxon>Eukaryota</taxon>
        <taxon>Viridiplantae</taxon>
        <taxon>Streptophyta</taxon>
        <taxon>Embryophyta</taxon>
        <taxon>Tracheophyta</taxon>
        <taxon>Spermatophyta</taxon>
        <taxon>Magnoliopsida</taxon>
        <taxon>Liliopsida</taxon>
        <taxon>Arecaceae</taxon>
        <taxon>Calamoideae</taxon>
        <taxon>Calameae</taxon>
        <taxon>Calaminae</taxon>
        <taxon>Calamus</taxon>
    </lineage>
</organism>
<evidence type="ECO:0000255" key="1">
    <source>
        <dbReference type="HAMAP-Rule" id="MF_01338"/>
    </source>
</evidence>
<keyword id="KW-0007">Acetylation</keyword>
<keyword id="KW-0113">Calvin cycle</keyword>
<keyword id="KW-0120">Carbon dioxide fixation</keyword>
<keyword id="KW-0150">Chloroplast</keyword>
<keyword id="KW-1015">Disulfide bond</keyword>
<keyword id="KW-0456">Lyase</keyword>
<keyword id="KW-0460">Magnesium</keyword>
<keyword id="KW-0479">Metal-binding</keyword>
<keyword id="KW-0488">Methylation</keyword>
<keyword id="KW-0503">Monooxygenase</keyword>
<keyword id="KW-0560">Oxidoreductase</keyword>
<keyword id="KW-0601">Photorespiration</keyword>
<keyword id="KW-0602">Photosynthesis</keyword>
<keyword id="KW-0934">Plastid</keyword>
<accession>P25829</accession>
<name>RBL_CALUS</name>
<geneLocation type="chloroplast"/>
<comment type="function">
    <text evidence="1">RuBisCO catalyzes two reactions: the carboxylation of D-ribulose 1,5-bisphosphate, the primary event in carbon dioxide fixation, as well as the oxidative fragmentation of the pentose substrate in the photorespiration process. Both reactions occur simultaneously and in competition at the same active site.</text>
</comment>
<comment type="catalytic activity">
    <reaction evidence="1">
        <text>2 (2R)-3-phosphoglycerate + 2 H(+) = D-ribulose 1,5-bisphosphate + CO2 + H2O</text>
        <dbReference type="Rhea" id="RHEA:23124"/>
        <dbReference type="ChEBI" id="CHEBI:15377"/>
        <dbReference type="ChEBI" id="CHEBI:15378"/>
        <dbReference type="ChEBI" id="CHEBI:16526"/>
        <dbReference type="ChEBI" id="CHEBI:57870"/>
        <dbReference type="ChEBI" id="CHEBI:58272"/>
        <dbReference type="EC" id="4.1.1.39"/>
    </reaction>
</comment>
<comment type="catalytic activity">
    <reaction evidence="1">
        <text>D-ribulose 1,5-bisphosphate + O2 = 2-phosphoglycolate + (2R)-3-phosphoglycerate + 2 H(+)</text>
        <dbReference type="Rhea" id="RHEA:36631"/>
        <dbReference type="ChEBI" id="CHEBI:15378"/>
        <dbReference type="ChEBI" id="CHEBI:15379"/>
        <dbReference type="ChEBI" id="CHEBI:57870"/>
        <dbReference type="ChEBI" id="CHEBI:58033"/>
        <dbReference type="ChEBI" id="CHEBI:58272"/>
    </reaction>
</comment>
<comment type="cofactor">
    <cofactor evidence="1">
        <name>Mg(2+)</name>
        <dbReference type="ChEBI" id="CHEBI:18420"/>
    </cofactor>
    <text evidence="1">Binds 1 Mg(2+) ion per subunit.</text>
</comment>
<comment type="subunit">
    <text evidence="1">Heterohexadecamer of 8 large chains and 8 small chains; disulfide-linked. The disulfide link is formed within the large subunit homodimers.</text>
</comment>
<comment type="subcellular location">
    <subcellularLocation>
        <location>Plastid</location>
        <location>Chloroplast</location>
    </subcellularLocation>
</comment>
<comment type="PTM">
    <text evidence="1">The disulfide bond which can form in the large chain dimeric partners within the hexadecamer appears to be associated with oxidative stress and protein turnover.</text>
</comment>
<comment type="miscellaneous">
    <text evidence="1">The basic functional RuBisCO is composed of a large chain homodimer in a 'head-to-tail' conformation. In form I RuBisCO this homodimer is arranged in a barrel-like tetramer with the small subunits forming a tetrameric 'cap' on each end of the 'barrel'.</text>
</comment>
<comment type="similarity">
    <text evidence="1">Belongs to the RuBisCO large chain family. Type I subfamily.</text>
</comment>
<gene>
    <name evidence="1" type="primary">rbcL</name>
</gene>
<reference key="1">
    <citation type="journal article" date="1990" name="Mol. Biol. Evol.">
        <title>Chloroplast DNA evolves slowly in the palm family (Arecaceae).</title>
        <authorList>
            <person name="Wilson M.A."/>
            <person name="Gaut B.S."/>
            <person name="Clegg M.T."/>
        </authorList>
    </citation>
    <scope>NUCLEOTIDE SEQUENCE [GENOMIC DNA]</scope>
</reference>